<organism>
    <name type="scientific">Equus caballus</name>
    <name type="common">Horse</name>
    <dbReference type="NCBI Taxonomy" id="9796"/>
    <lineage>
        <taxon>Eukaryota</taxon>
        <taxon>Metazoa</taxon>
        <taxon>Chordata</taxon>
        <taxon>Craniata</taxon>
        <taxon>Vertebrata</taxon>
        <taxon>Euteleostomi</taxon>
        <taxon>Mammalia</taxon>
        <taxon>Eutheria</taxon>
        <taxon>Laurasiatheria</taxon>
        <taxon>Perissodactyla</taxon>
        <taxon>Equidae</taxon>
        <taxon>Equus</taxon>
    </lineage>
</organism>
<comment type="function">
    <text evidence="2 4">The carboxylated form is one of the main organic components of the bone matrix, which constitutes 1-2% of the total bone protein (Ref.1). It acts as a negative regulator of bone formation and is required to limit bone formation without impairing bone resorption or mineralization. The carboxylated form binds strongly to apatite and calcium (By similarity).</text>
</comment>
<comment type="function">
    <text evidence="2">The uncarboxylated form acts as a hormone secreted by osteoblasts, which regulates different cellular processes, such as energy metabolism, male fertility and brain development. Regulates of energy metabolism by acting as a hormone favoring pancreatic beta-cell proliferation, insulin secretion and sensitivity and energy expenditure. Uncarboxylated osteocalcin hormone also promotes testosterone production in the testes: acts as a ligand for G protein-coupled receptor GPRC6A at the surface of Leydig cells, initiating a signaling response that promotes the expression of enzymes required for testosterone synthesis in a CREB-dependent manner. Also acts as a regulator of brain development: osteocalcin hormone crosses the blood-brain barrier and acts as a ligand for GPR158 on neurons, initiating a signaling response that prevents neuronal apoptosis in the hippocampus, favors the synthesis of all monoamine neurotransmitters and inhibits that of gamma-aminobutyric acid (GABA). Osteocalcin also crosses the placenta during pregnancy and maternal osteocalcin is required for fetal brain development.</text>
</comment>
<comment type="subcellular location">
    <subcellularLocation>
        <location evidence="4">Secreted</location>
    </subcellularLocation>
</comment>
<comment type="PTM">
    <text evidence="2 3 4">Gamma-carboxyglutamate residues are formed by vitamin K dependent carboxylation by GGCX. These residues are essential for the binding of calcium (By similarity) (Ref.1). Decarboxylation promotes the hormone activity (By similarity).</text>
</comment>
<comment type="similarity">
    <text evidence="5">Belongs to the osteocalcin/matrix Gla protein family.</text>
</comment>
<protein>
    <recommendedName>
        <fullName>Osteocalcin</fullName>
    </recommendedName>
    <alternativeName>
        <fullName>Bone Gla protein</fullName>
        <shortName>BGP</shortName>
    </alternativeName>
    <alternativeName>
        <fullName>Gamma-carboxyglutamic acid-containing protein</fullName>
    </alternativeName>
</protein>
<dbReference type="SMR" id="P83005"/>
<dbReference type="STRING" id="9796.ENSECAP00000021446"/>
<dbReference type="PaxDb" id="9796-ENSECAP00000021446"/>
<dbReference type="InParanoid" id="P83005"/>
<dbReference type="Proteomes" id="UP000002281">
    <property type="component" value="Unplaced"/>
</dbReference>
<dbReference type="GO" id="GO:0005737">
    <property type="term" value="C:cytoplasm"/>
    <property type="evidence" value="ECO:0000250"/>
    <property type="project" value="UniProtKB"/>
</dbReference>
<dbReference type="GO" id="GO:0005576">
    <property type="term" value="C:extracellular region"/>
    <property type="evidence" value="ECO:0007669"/>
    <property type="project" value="UniProtKB-SubCell"/>
</dbReference>
<dbReference type="GO" id="GO:0005509">
    <property type="term" value="F:calcium ion binding"/>
    <property type="evidence" value="ECO:0007669"/>
    <property type="project" value="InterPro"/>
</dbReference>
<dbReference type="GO" id="GO:0005179">
    <property type="term" value="F:hormone activity"/>
    <property type="evidence" value="ECO:0000250"/>
    <property type="project" value="UniProtKB"/>
</dbReference>
<dbReference type="GO" id="GO:0008147">
    <property type="term" value="F:structural constituent of bone"/>
    <property type="evidence" value="ECO:0000250"/>
    <property type="project" value="UniProtKB"/>
</dbReference>
<dbReference type="GO" id="GO:0031214">
    <property type="term" value="P:biomineral tissue development"/>
    <property type="evidence" value="ECO:0007669"/>
    <property type="project" value="UniProtKB-KW"/>
</dbReference>
<dbReference type="GO" id="GO:0060348">
    <property type="term" value="P:bone development"/>
    <property type="evidence" value="ECO:0007669"/>
    <property type="project" value="InterPro"/>
</dbReference>
<dbReference type="GO" id="GO:0007420">
    <property type="term" value="P:brain development"/>
    <property type="evidence" value="ECO:0000250"/>
    <property type="project" value="UniProtKB"/>
</dbReference>
<dbReference type="GO" id="GO:0032869">
    <property type="term" value="P:cellular response to insulin stimulus"/>
    <property type="evidence" value="ECO:0000250"/>
    <property type="project" value="UniProtKB"/>
</dbReference>
<dbReference type="GO" id="GO:0050890">
    <property type="term" value="P:cognition"/>
    <property type="evidence" value="ECO:0000250"/>
    <property type="project" value="UniProtKB"/>
</dbReference>
<dbReference type="GO" id="GO:0042593">
    <property type="term" value="P:glucose homeostasis"/>
    <property type="evidence" value="ECO:0000250"/>
    <property type="project" value="UniProtKB"/>
</dbReference>
<dbReference type="GO" id="GO:0007611">
    <property type="term" value="P:learning or memory"/>
    <property type="evidence" value="ECO:0000250"/>
    <property type="project" value="UniProtKB"/>
</dbReference>
<dbReference type="GO" id="GO:1903011">
    <property type="term" value="P:negative regulation of bone development"/>
    <property type="evidence" value="ECO:0000250"/>
    <property type="project" value="UniProtKB"/>
</dbReference>
<dbReference type="GO" id="GO:0001956">
    <property type="term" value="P:positive regulation of neurotransmitter secretion"/>
    <property type="evidence" value="ECO:0000250"/>
    <property type="project" value="UniProtKB"/>
</dbReference>
<dbReference type="GO" id="GO:0030500">
    <property type="term" value="P:regulation of bone mineralization"/>
    <property type="evidence" value="ECO:0007669"/>
    <property type="project" value="InterPro"/>
</dbReference>
<dbReference type="GO" id="GO:1900076">
    <property type="term" value="P:regulation of cellular response to insulin stimulus"/>
    <property type="evidence" value="ECO:0007669"/>
    <property type="project" value="InterPro"/>
</dbReference>
<dbReference type="GO" id="GO:2000224">
    <property type="term" value="P:regulation of testosterone biosynthetic process"/>
    <property type="evidence" value="ECO:0000250"/>
    <property type="project" value="UniProtKB"/>
</dbReference>
<dbReference type="GO" id="GO:0032571">
    <property type="term" value="P:response to vitamin K"/>
    <property type="evidence" value="ECO:0007669"/>
    <property type="project" value="InterPro"/>
</dbReference>
<dbReference type="GO" id="GO:0044342">
    <property type="term" value="P:type B pancreatic cell proliferation"/>
    <property type="evidence" value="ECO:0000250"/>
    <property type="project" value="UniProtKB"/>
</dbReference>
<dbReference type="InterPro" id="IPR035972">
    <property type="entry name" value="GLA-like_dom_SF"/>
</dbReference>
<dbReference type="InterPro" id="IPR000294">
    <property type="entry name" value="GLA_domain"/>
</dbReference>
<dbReference type="InterPro" id="IPR039176">
    <property type="entry name" value="Osteocalcin"/>
</dbReference>
<dbReference type="InterPro" id="IPR002384">
    <property type="entry name" value="Osteocalcin/MGP"/>
</dbReference>
<dbReference type="PANTHER" id="PTHR14235">
    <property type="entry name" value="OSTEOCALCIN"/>
    <property type="match status" value="1"/>
</dbReference>
<dbReference type="PANTHER" id="PTHR14235:SF0">
    <property type="entry name" value="OSTEOCALCIN"/>
    <property type="match status" value="1"/>
</dbReference>
<dbReference type="PRINTS" id="PR00002">
    <property type="entry name" value="GLABONE"/>
</dbReference>
<dbReference type="SMART" id="SM00069">
    <property type="entry name" value="GLA"/>
    <property type="match status" value="1"/>
</dbReference>
<dbReference type="SUPFAM" id="SSF57630">
    <property type="entry name" value="GLA-domain"/>
    <property type="match status" value="1"/>
</dbReference>
<dbReference type="PROSITE" id="PS00011">
    <property type="entry name" value="GLA_1"/>
    <property type="match status" value="1"/>
</dbReference>
<dbReference type="PROSITE" id="PS50998">
    <property type="entry name" value="GLA_2"/>
    <property type="match status" value="1"/>
</dbReference>
<sequence>YLDHWLGAPAPYPDPLEPRREVCELNPDCDELADHIGFQEAYRRFYGPV</sequence>
<accession>P83005</accession>
<name>OSTCN_HORSE</name>
<reference key="1">
    <citation type="journal article" date="2002" name="Ann. Med. Vet.">
        <title>Isolation and characterization of equine osteocalcin.</title>
        <authorList>
            <person name="Carstanjen B."/>
            <person name="Wattiez R."/>
            <person name="Amory H."/>
            <person name="Lepage O.M."/>
            <person name="Remy B."/>
        </authorList>
    </citation>
    <scope>PROTEIN SEQUENCE</scope>
    <scope>FUNCTION</scope>
    <scope>HYDROXYLATION AT PRO-9</scope>
    <scope>GAMMA-CARBOXYGLUTAMATION AT GLU-17; GLU-21 AND GLU-24</scope>
    <source>
        <tissue>Bone</tissue>
    </source>
</reference>
<keyword id="KW-0091">Biomineralization</keyword>
<keyword id="KW-0106">Calcium</keyword>
<keyword id="KW-0903">Direct protein sequencing</keyword>
<keyword id="KW-1015">Disulfide bond</keyword>
<keyword id="KW-0301">Gamma-carboxyglutamic acid</keyword>
<keyword id="KW-0372">Hormone</keyword>
<keyword id="KW-0379">Hydroxylation</keyword>
<keyword id="KW-0479">Metal-binding</keyword>
<keyword id="KW-1185">Reference proteome</keyword>
<keyword id="KW-0964">Secreted</keyword>
<feature type="chain" id="PRO_0000148900" description="Osteocalcin">
    <location>
        <begin position="1"/>
        <end position="49"/>
    </location>
</feature>
<feature type="domain" description="Gla" evidence="3">
    <location>
        <begin position="1"/>
        <end position="47"/>
    </location>
</feature>
<feature type="binding site" evidence="1">
    <location>
        <position position="17"/>
    </location>
    <ligand>
        <name>Ca(2+)</name>
        <dbReference type="ChEBI" id="CHEBI:29108"/>
        <label>1</label>
    </ligand>
</feature>
<feature type="binding site" evidence="1">
    <location>
        <position position="21"/>
    </location>
    <ligand>
        <name>Ca(2+)</name>
        <dbReference type="ChEBI" id="CHEBI:29108"/>
        <label>2</label>
    </ligand>
</feature>
<feature type="binding site" evidence="1">
    <location>
        <position position="24"/>
    </location>
    <ligand>
        <name>Ca(2+)</name>
        <dbReference type="ChEBI" id="CHEBI:29108"/>
        <label>2</label>
    </ligand>
</feature>
<feature type="binding site" evidence="1">
    <location>
        <position position="24"/>
    </location>
    <ligand>
        <name>Ca(2+)</name>
        <dbReference type="ChEBI" id="CHEBI:29108"/>
        <label>3</label>
    </ligand>
</feature>
<feature type="binding site" evidence="1">
    <location>
        <position position="30"/>
    </location>
    <ligand>
        <name>Ca(2+)</name>
        <dbReference type="ChEBI" id="CHEBI:29108"/>
        <label>3</label>
    </ligand>
</feature>
<feature type="modified residue" description="Hydroxyproline" evidence="4">
    <location>
        <position position="9"/>
    </location>
</feature>
<feature type="modified residue" description="4-carboxyglutamate" evidence="3 4">
    <location>
        <position position="17"/>
    </location>
</feature>
<feature type="modified residue" description="4-carboxyglutamate" evidence="3 4">
    <location>
        <position position="21"/>
    </location>
</feature>
<feature type="modified residue" description="4-carboxyglutamate" evidence="3 4">
    <location>
        <position position="24"/>
    </location>
</feature>
<feature type="disulfide bond" evidence="3">
    <location>
        <begin position="23"/>
        <end position="29"/>
    </location>
</feature>
<proteinExistence type="evidence at protein level"/>
<gene>
    <name type="primary">BGLAP</name>
</gene>
<evidence type="ECO:0000250" key="1">
    <source>
        <dbReference type="UniProtKB" id="P02820"/>
    </source>
</evidence>
<evidence type="ECO:0000250" key="2">
    <source>
        <dbReference type="UniProtKB" id="P86546"/>
    </source>
</evidence>
<evidence type="ECO:0000255" key="3">
    <source>
        <dbReference type="PROSITE-ProRule" id="PRU00463"/>
    </source>
</evidence>
<evidence type="ECO:0000269" key="4">
    <source ref="1"/>
</evidence>
<evidence type="ECO:0000305" key="5"/>